<gene>
    <name type="primary">CCDC69</name>
</gene>
<dbReference type="EMBL" id="BC148945">
    <property type="protein sequence ID" value="AAI48946.1"/>
    <property type="status" value="ALT_INIT"/>
    <property type="molecule type" value="mRNA"/>
</dbReference>
<dbReference type="RefSeq" id="NP_001193553.1">
    <property type="nucleotide sequence ID" value="NM_001206624.1"/>
</dbReference>
<dbReference type="SMR" id="A6QNP9"/>
<dbReference type="FunCoup" id="A6QNP9">
    <property type="interactions" value="21"/>
</dbReference>
<dbReference type="STRING" id="9913.ENSBTAP00000040454"/>
<dbReference type="PaxDb" id="9913-ENSBTAP00000040454"/>
<dbReference type="Ensembl" id="ENSBTAT00000042846.5">
    <property type="protein sequence ID" value="ENSBTAP00000040454.4"/>
    <property type="gene ID" value="ENSBTAG00000002834.7"/>
</dbReference>
<dbReference type="GeneID" id="529878"/>
<dbReference type="KEGG" id="bta:529878"/>
<dbReference type="CTD" id="26112"/>
<dbReference type="VEuPathDB" id="HostDB:ENSBTAG00000002834"/>
<dbReference type="VGNC" id="VGNC:26911">
    <property type="gene designation" value="CCDC69"/>
</dbReference>
<dbReference type="eggNOG" id="ENOG502RYPP">
    <property type="taxonomic scope" value="Eukaryota"/>
</dbReference>
<dbReference type="GeneTree" id="ENSGT00950000183026"/>
<dbReference type="InParanoid" id="A6QNP9"/>
<dbReference type="OMA" id="DSCPTIH"/>
<dbReference type="OrthoDB" id="10038993at2759"/>
<dbReference type="Proteomes" id="UP000009136">
    <property type="component" value="Chromosome 7"/>
</dbReference>
<dbReference type="Bgee" id="ENSBTAG00000002834">
    <property type="expression patterns" value="Expressed in omental fat pad and 103 other cell types or tissues"/>
</dbReference>
<dbReference type="GO" id="GO:0005737">
    <property type="term" value="C:cytoplasm"/>
    <property type="evidence" value="ECO:0007669"/>
    <property type="project" value="UniProtKB-KW"/>
</dbReference>
<dbReference type="GO" id="GO:0030496">
    <property type="term" value="C:midbody"/>
    <property type="evidence" value="ECO:0007669"/>
    <property type="project" value="UniProtKB-SubCell"/>
</dbReference>
<dbReference type="GO" id="GO:0005634">
    <property type="term" value="C:nucleus"/>
    <property type="evidence" value="ECO:0000318"/>
    <property type="project" value="GO_Central"/>
</dbReference>
<dbReference type="GO" id="GO:0051233">
    <property type="term" value="C:spindle midzone"/>
    <property type="evidence" value="ECO:0000250"/>
    <property type="project" value="UniProtKB"/>
</dbReference>
<dbReference type="GO" id="GO:0008017">
    <property type="term" value="F:microtubule binding"/>
    <property type="evidence" value="ECO:0000318"/>
    <property type="project" value="GO_Central"/>
</dbReference>
<dbReference type="GO" id="GO:0051255">
    <property type="term" value="P:spindle midzone assembly"/>
    <property type="evidence" value="ECO:0000250"/>
    <property type="project" value="UniProtKB"/>
</dbReference>
<dbReference type="InterPro" id="IPR051293">
    <property type="entry name" value="MTUS1/CCDC69"/>
</dbReference>
<dbReference type="PANTHER" id="PTHR24200:SF6">
    <property type="entry name" value="COILED-COIL DOMAIN-CONTAINING PROTEIN 69"/>
    <property type="match status" value="1"/>
</dbReference>
<dbReference type="PANTHER" id="PTHR24200">
    <property type="entry name" value="TOUCAN, ISOFORM A"/>
    <property type="match status" value="1"/>
</dbReference>
<name>CCD69_BOVIN</name>
<comment type="function">
    <text evidence="1">May act as a scaffold to regulate the recruitment and assembly of spindle midzone components. Required for the localization of AURKB and PLK1 to the spindle midzone.</text>
</comment>
<comment type="subcellular location">
    <subcellularLocation>
        <location evidence="1">Cytoplasm</location>
        <location evidence="1">Cytoskeleton</location>
        <location evidence="1">Spindle</location>
    </subcellularLocation>
    <subcellularLocation>
        <location evidence="1">Midbody</location>
    </subcellularLocation>
    <text evidence="1">During early anaphase, localizes along overlapping interpolar microtubules between the separating chromosomes. During late anaphase, localizes to the center of spindle midzone. Concentrated at the midbody during telophase.</text>
</comment>
<comment type="similarity">
    <text evidence="5">Belongs to the CCDC69 family.</text>
</comment>
<comment type="sequence caution" evidence="5">
    <conflict type="erroneous initiation">
        <sequence resource="EMBL-CDS" id="AAI48946"/>
    </conflict>
</comment>
<feature type="initiator methionine" description="Removed" evidence="3">
    <location>
        <position position="1"/>
    </location>
</feature>
<feature type="chain" id="PRO_0000328961" description="Coiled-coil domain-containing protein 69">
    <location>
        <begin position="2"/>
        <end position="294"/>
    </location>
</feature>
<feature type="region of interest" description="Disordered" evidence="4">
    <location>
        <begin position="1"/>
        <end position="43"/>
    </location>
</feature>
<feature type="coiled-coil region" evidence="3">
    <location>
        <begin position="47"/>
        <end position="270"/>
    </location>
</feature>
<feature type="compositionally biased region" description="Basic and acidic residues" evidence="4">
    <location>
        <begin position="20"/>
        <end position="29"/>
    </location>
</feature>
<feature type="modified residue" description="Phosphoserine" evidence="2">
    <location>
        <position position="152"/>
    </location>
</feature>
<feature type="modified residue" description="Phosphoserine" evidence="1">
    <location>
        <position position="239"/>
    </location>
</feature>
<feature type="lipid moiety-binding region" description="N-myristoyl glycine" evidence="3">
    <location>
        <position position="2"/>
    </location>
</feature>
<sequence>MGCGHSRLSCCKPPKKRRQRPDQPPKPEPQELGPLNGDTATTDHVCASEEAEQHQKAITRILQQHEEDKKKWAQQVEKERELELGEKLNEQRKVLEGEHVEALRVLQASYEQDKEALTHSFQEAKAALQETIDRLTAQIEAFQAKMKRAEESILSRDYKKHIQEHGSLSQFWEQELESLHFVIEMKNERIHELDKRLILMETVKEKNLLLEEKITTLQQENEDLHARGRNQMVVSRQLSEDLLLAREALEKESQSRRQLQQEKEELLYRVLGADAAPAFPLASVTPTEVSFLAT</sequence>
<proteinExistence type="evidence at transcript level"/>
<evidence type="ECO:0000250" key="1">
    <source>
        <dbReference type="UniProtKB" id="A6NI79"/>
    </source>
</evidence>
<evidence type="ECO:0000250" key="2">
    <source>
        <dbReference type="UniProtKB" id="Q3TCJ8"/>
    </source>
</evidence>
<evidence type="ECO:0000255" key="3"/>
<evidence type="ECO:0000256" key="4">
    <source>
        <dbReference type="SAM" id="MobiDB-lite"/>
    </source>
</evidence>
<evidence type="ECO:0000305" key="5"/>
<accession>A6QNP9</accession>
<protein>
    <recommendedName>
        <fullName>Coiled-coil domain-containing protein 69</fullName>
    </recommendedName>
</protein>
<keyword id="KW-0175">Coiled coil</keyword>
<keyword id="KW-0963">Cytoplasm</keyword>
<keyword id="KW-0206">Cytoskeleton</keyword>
<keyword id="KW-0449">Lipoprotein</keyword>
<keyword id="KW-0519">Myristate</keyword>
<keyword id="KW-0597">Phosphoprotein</keyword>
<keyword id="KW-1185">Reference proteome</keyword>
<organism>
    <name type="scientific">Bos taurus</name>
    <name type="common">Bovine</name>
    <dbReference type="NCBI Taxonomy" id="9913"/>
    <lineage>
        <taxon>Eukaryota</taxon>
        <taxon>Metazoa</taxon>
        <taxon>Chordata</taxon>
        <taxon>Craniata</taxon>
        <taxon>Vertebrata</taxon>
        <taxon>Euteleostomi</taxon>
        <taxon>Mammalia</taxon>
        <taxon>Eutheria</taxon>
        <taxon>Laurasiatheria</taxon>
        <taxon>Artiodactyla</taxon>
        <taxon>Ruminantia</taxon>
        <taxon>Pecora</taxon>
        <taxon>Bovidae</taxon>
        <taxon>Bovinae</taxon>
        <taxon>Bos</taxon>
    </lineage>
</organism>
<reference key="1">
    <citation type="submission" date="2007-07" db="EMBL/GenBank/DDBJ databases">
        <authorList>
            <consortium name="NIH - Mammalian Gene Collection (MGC) project"/>
        </authorList>
    </citation>
    <scope>NUCLEOTIDE SEQUENCE [LARGE SCALE MRNA]</scope>
    <source>
        <strain>Hereford</strain>
        <tissue>Ascending colon</tissue>
    </source>
</reference>